<organism>
    <name type="scientific">Schizosaccharomyces pombe (strain 972 / ATCC 24843)</name>
    <name type="common">Fission yeast</name>
    <dbReference type="NCBI Taxonomy" id="284812"/>
    <lineage>
        <taxon>Eukaryota</taxon>
        <taxon>Fungi</taxon>
        <taxon>Dikarya</taxon>
        <taxon>Ascomycota</taxon>
        <taxon>Taphrinomycotina</taxon>
        <taxon>Schizosaccharomycetes</taxon>
        <taxon>Schizosaccharomycetales</taxon>
        <taxon>Schizosaccharomycetaceae</taxon>
        <taxon>Schizosaccharomyces</taxon>
    </lineage>
</organism>
<feature type="chain" id="PRO_0000317134" description="PCI domain-containing protein C1105.07c">
    <location>
        <begin position="1"/>
        <end position="442"/>
    </location>
</feature>
<feature type="domain" description="PCI" evidence="1">
    <location>
        <begin position="224"/>
        <end position="415"/>
    </location>
</feature>
<proteinExistence type="predicted"/>
<name>YON7_SCHPO</name>
<accession>Q9Y820</accession>
<evidence type="ECO:0000255" key="1">
    <source>
        <dbReference type="PROSITE-ProRule" id="PRU01185"/>
    </source>
</evidence>
<evidence type="ECO:0000269" key="2">
    <source>
    </source>
</evidence>
<reference key="1">
    <citation type="journal article" date="2002" name="Nature">
        <title>The genome sequence of Schizosaccharomyces pombe.</title>
        <authorList>
            <person name="Wood V."/>
            <person name="Gwilliam R."/>
            <person name="Rajandream M.A."/>
            <person name="Lyne M.H."/>
            <person name="Lyne R."/>
            <person name="Stewart A."/>
            <person name="Sgouros J.G."/>
            <person name="Peat N."/>
            <person name="Hayles J."/>
            <person name="Baker S.G."/>
            <person name="Basham D."/>
            <person name="Bowman S."/>
            <person name="Brooks K."/>
            <person name="Brown D."/>
            <person name="Brown S."/>
            <person name="Chillingworth T."/>
            <person name="Churcher C.M."/>
            <person name="Collins M."/>
            <person name="Connor R."/>
            <person name="Cronin A."/>
            <person name="Davis P."/>
            <person name="Feltwell T."/>
            <person name="Fraser A."/>
            <person name="Gentles S."/>
            <person name="Goble A."/>
            <person name="Hamlin N."/>
            <person name="Harris D.E."/>
            <person name="Hidalgo J."/>
            <person name="Hodgson G."/>
            <person name="Holroyd S."/>
            <person name="Hornsby T."/>
            <person name="Howarth S."/>
            <person name="Huckle E.J."/>
            <person name="Hunt S."/>
            <person name="Jagels K."/>
            <person name="James K.D."/>
            <person name="Jones L."/>
            <person name="Jones M."/>
            <person name="Leather S."/>
            <person name="McDonald S."/>
            <person name="McLean J."/>
            <person name="Mooney P."/>
            <person name="Moule S."/>
            <person name="Mungall K.L."/>
            <person name="Murphy L.D."/>
            <person name="Niblett D."/>
            <person name="Odell C."/>
            <person name="Oliver K."/>
            <person name="O'Neil S."/>
            <person name="Pearson D."/>
            <person name="Quail M.A."/>
            <person name="Rabbinowitsch E."/>
            <person name="Rutherford K.M."/>
            <person name="Rutter S."/>
            <person name="Saunders D."/>
            <person name="Seeger K."/>
            <person name="Sharp S."/>
            <person name="Skelton J."/>
            <person name="Simmonds M.N."/>
            <person name="Squares R."/>
            <person name="Squares S."/>
            <person name="Stevens K."/>
            <person name="Taylor K."/>
            <person name="Taylor R.G."/>
            <person name="Tivey A."/>
            <person name="Walsh S.V."/>
            <person name="Warren T."/>
            <person name="Whitehead S."/>
            <person name="Woodward J.R."/>
            <person name="Volckaert G."/>
            <person name="Aert R."/>
            <person name="Robben J."/>
            <person name="Grymonprez B."/>
            <person name="Weltjens I."/>
            <person name="Vanstreels E."/>
            <person name="Rieger M."/>
            <person name="Schaefer M."/>
            <person name="Mueller-Auer S."/>
            <person name="Gabel C."/>
            <person name="Fuchs M."/>
            <person name="Duesterhoeft A."/>
            <person name="Fritzc C."/>
            <person name="Holzer E."/>
            <person name="Moestl D."/>
            <person name="Hilbert H."/>
            <person name="Borzym K."/>
            <person name="Langer I."/>
            <person name="Beck A."/>
            <person name="Lehrach H."/>
            <person name="Reinhardt R."/>
            <person name="Pohl T.M."/>
            <person name="Eger P."/>
            <person name="Zimmermann W."/>
            <person name="Wedler H."/>
            <person name="Wambutt R."/>
            <person name="Purnelle B."/>
            <person name="Goffeau A."/>
            <person name="Cadieu E."/>
            <person name="Dreano S."/>
            <person name="Gloux S."/>
            <person name="Lelaure V."/>
            <person name="Mottier S."/>
            <person name="Galibert F."/>
            <person name="Aves S.J."/>
            <person name="Xiang Z."/>
            <person name="Hunt C."/>
            <person name="Moore K."/>
            <person name="Hurst S.M."/>
            <person name="Lucas M."/>
            <person name="Rochet M."/>
            <person name="Gaillardin C."/>
            <person name="Tallada V.A."/>
            <person name="Garzon A."/>
            <person name="Thode G."/>
            <person name="Daga R.R."/>
            <person name="Cruzado L."/>
            <person name="Jimenez J."/>
            <person name="Sanchez M."/>
            <person name="del Rey F."/>
            <person name="Benito J."/>
            <person name="Dominguez A."/>
            <person name="Revuelta J.L."/>
            <person name="Moreno S."/>
            <person name="Armstrong J."/>
            <person name="Forsburg S.L."/>
            <person name="Cerutti L."/>
            <person name="Lowe T."/>
            <person name="McCombie W.R."/>
            <person name="Paulsen I."/>
            <person name="Potashkin J."/>
            <person name="Shpakovski G.V."/>
            <person name="Ussery D."/>
            <person name="Barrell B.G."/>
            <person name="Nurse P."/>
        </authorList>
    </citation>
    <scope>NUCLEOTIDE SEQUENCE [LARGE SCALE GENOMIC DNA]</scope>
    <source>
        <strain>972 / ATCC 24843</strain>
    </source>
</reference>
<reference key="2">
    <citation type="journal article" date="2006" name="Nat. Biotechnol.">
        <title>ORFeome cloning and global analysis of protein localization in the fission yeast Schizosaccharomyces pombe.</title>
        <authorList>
            <person name="Matsuyama A."/>
            <person name="Arai R."/>
            <person name="Yashiroda Y."/>
            <person name="Shirai A."/>
            <person name="Kamata A."/>
            <person name="Sekido S."/>
            <person name="Kobayashi Y."/>
            <person name="Hashimoto A."/>
            <person name="Hamamoto M."/>
            <person name="Hiraoka Y."/>
            <person name="Horinouchi S."/>
            <person name="Yoshida M."/>
        </authorList>
    </citation>
    <scope>SUBCELLULAR LOCATION [LARGE SCALE ANALYSIS]</scope>
</reference>
<dbReference type="EMBL" id="CU329671">
    <property type="protein sequence ID" value="CAB50970.1"/>
    <property type="molecule type" value="Genomic_DNA"/>
</dbReference>
<dbReference type="PIR" id="T39284">
    <property type="entry name" value="T39284"/>
</dbReference>
<dbReference type="SMR" id="Q9Y820"/>
<dbReference type="BioGRID" id="276547">
    <property type="interactions" value="4"/>
</dbReference>
<dbReference type="FunCoup" id="Q9Y820">
    <property type="interactions" value="15"/>
</dbReference>
<dbReference type="STRING" id="284812.Q9Y820"/>
<dbReference type="PaxDb" id="4896-SPBC1105.07c.1"/>
<dbReference type="EnsemblFungi" id="SPBC1105.07c.1">
    <property type="protein sequence ID" value="SPBC1105.07c.1:pep"/>
    <property type="gene ID" value="SPBC1105.07c"/>
</dbReference>
<dbReference type="KEGG" id="spo:2540003"/>
<dbReference type="PomBase" id="SPBC1105.07c"/>
<dbReference type="VEuPathDB" id="FungiDB:SPBC1105.07c"/>
<dbReference type="eggNOG" id="KOG2688">
    <property type="taxonomic scope" value="Eukaryota"/>
</dbReference>
<dbReference type="HOGENOM" id="CLU_031567_3_0_1"/>
<dbReference type="InParanoid" id="Q9Y820"/>
<dbReference type="OMA" id="PQLCSNI"/>
<dbReference type="PhylomeDB" id="Q9Y820"/>
<dbReference type="PRO" id="PR:Q9Y820"/>
<dbReference type="Proteomes" id="UP000002485">
    <property type="component" value="Chromosome II"/>
</dbReference>
<dbReference type="GO" id="GO:0005829">
    <property type="term" value="C:cytosol"/>
    <property type="evidence" value="ECO:0007005"/>
    <property type="project" value="PomBase"/>
</dbReference>
<dbReference type="GO" id="GO:0005635">
    <property type="term" value="C:nuclear envelope"/>
    <property type="evidence" value="ECO:0007005"/>
    <property type="project" value="PomBase"/>
</dbReference>
<dbReference type="GO" id="GO:0005643">
    <property type="term" value="C:nuclear pore"/>
    <property type="evidence" value="ECO:0000266"/>
    <property type="project" value="PomBase"/>
</dbReference>
<dbReference type="GO" id="GO:0005634">
    <property type="term" value="C:nucleus"/>
    <property type="evidence" value="ECO:0007005"/>
    <property type="project" value="PomBase"/>
</dbReference>
<dbReference type="GO" id="GO:0070390">
    <property type="term" value="C:transcription export complex 2"/>
    <property type="evidence" value="ECO:0000318"/>
    <property type="project" value="GO_Central"/>
</dbReference>
<dbReference type="GO" id="GO:0003690">
    <property type="term" value="F:double-stranded DNA binding"/>
    <property type="evidence" value="ECO:0000318"/>
    <property type="project" value="GO_Central"/>
</dbReference>
<dbReference type="GO" id="GO:0003723">
    <property type="term" value="F:RNA binding"/>
    <property type="evidence" value="ECO:0000318"/>
    <property type="project" value="GO_Central"/>
</dbReference>
<dbReference type="GO" id="GO:0016973">
    <property type="term" value="P:poly(A)+ mRNA export from nucleus"/>
    <property type="evidence" value="ECO:0000318"/>
    <property type="project" value="GO_Central"/>
</dbReference>
<dbReference type="GO" id="GO:0000973">
    <property type="term" value="P:post-transcriptional tethering of RNA polymerase II gene DNA at nuclear periphery"/>
    <property type="evidence" value="ECO:0000318"/>
    <property type="project" value="GO_Central"/>
</dbReference>
<dbReference type="GO" id="GO:0006368">
    <property type="term" value="P:transcription elongation by RNA polymerase II"/>
    <property type="evidence" value="ECO:0000318"/>
    <property type="project" value="GO_Central"/>
</dbReference>
<dbReference type="Gene3D" id="1.10.10.10">
    <property type="entry name" value="Winged helix-like DNA-binding domain superfamily/Winged helix DNA-binding domain"/>
    <property type="match status" value="1"/>
</dbReference>
<dbReference type="InterPro" id="IPR045114">
    <property type="entry name" value="Csn12-like"/>
</dbReference>
<dbReference type="InterPro" id="IPR000717">
    <property type="entry name" value="PCI_dom"/>
</dbReference>
<dbReference type="InterPro" id="IPR036388">
    <property type="entry name" value="WH-like_DNA-bd_sf"/>
</dbReference>
<dbReference type="PANTHER" id="PTHR12732:SF8">
    <property type="entry name" value="NUCLEAR MRNA EXPORT PROTEIN THP1"/>
    <property type="match status" value="1"/>
</dbReference>
<dbReference type="PANTHER" id="PTHR12732">
    <property type="entry name" value="UNCHARACTERIZED PROTEASOME COMPONENT REGION PCI-CONTAINING"/>
    <property type="match status" value="1"/>
</dbReference>
<dbReference type="Pfam" id="PF01399">
    <property type="entry name" value="PCI"/>
    <property type="match status" value="1"/>
</dbReference>
<dbReference type="SMART" id="SM00753">
    <property type="entry name" value="PAM"/>
    <property type="match status" value="1"/>
</dbReference>
<dbReference type="PROSITE" id="PS50250">
    <property type="entry name" value="PCI"/>
    <property type="match status" value="1"/>
</dbReference>
<protein>
    <recommendedName>
        <fullName>PCI domain-containing protein C1105.07c</fullName>
    </recommendedName>
</protein>
<keyword id="KW-0963">Cytoplasm</keyword>
<keyword id="KW-0539">Nucleus</keyword>
<keyword id="KW-1185">Reference proteome</keyword>
<comment type="subcellular location">
    <subcellularLocation>
        <location evidence="2">Cytoplasm</location>
    </subcellularLocation>
    <subcellularLocation>
        <location evidence="2">Nucleus envelope</location>
    </subcellularLocation>
</comment>
<sequence>MSLNDFLQTLSNAVGEKNSNTLEKCIILDPSEPSFQQLSKTLFLDRKGKNKLNGTIQKEFGRIRGWKELVTTYFEYVENAASSPDQRKWELLQNLYSNLTTCFSHIDGAWLCTIVKRVSKLYVKLSLQLDTSTPTLEDSFDGNGFIQRKYVSDASRNVLRTFNSILSDRQQNINPSKKDAIFCIANLLCLLYFRLKQIRLCQTIQANVISSGADISRATMAELVTFRYYLGRCHLYQRKIHQAKDHLLFSFLQCPDECYHQKRLSLIYLTTCLLILGKSPTKGLLEKYKLTAAFEPLIKALKSGDIKSFRLSLEDNSRRKWFIKRGIYLTLLDRCEIILWRNLFRKVFLFTFEQSQKTPHVSGSYLLTAARLSTNDNSYDMDDVECICVSLIDQGYIKGYIIHASSTLVLKKDPSFGFSVIESLMPIARNDHAEKEFFHANA</sequence>
<gene>
    <name type="ORF">SPBC1105.07c</name>
</gene>